<name>PSRP_BURA4</name>
<proteinExistence type="inferred from homology"/>
<dbReference type="EC" id="2.7.11.33" evidence="1"/>
<dbReference type="EC" id="2.7.4.28" evidence="1"/>
<dbReference type="EMBL" id="CP001025">
    <property type="protein sequence ID" value="ACB64387.1"/>
    <property type="molecule type" value="Genomic_DNA"/>
</dbReference>
<dbReference type="RefSeq" id="WP_011657274.1">
    <property type="nucleotide sequence ID" value="NC_010551.1"/>
</dbReference>
<dbReference type="SMR" id="B1YS58"/>
<dbReference type="KEGG" id="bac:BamMC406_1905"/>
<dbReference type="HOGENOM" id="CLU_046206_1_0_4"/>
<dbReference type="OrthoDB" id="9782201at2"/>
<dbReference type="Proteomes" id="UP000001680">
    <property type="component" value="Chromosome 1"/>
</dbReference>
<dbReference type="GO" id="GO:0043531">
    <property type="term" value="F:ADP binding"/>
    <property type="evidence" value="ECO:0007669"/>
    <property type="project" value="UniProtKB-UniRule"/>
</dbReference>
<dbReference type="GO" id="GO:0005524">
    <property type="term" value="F:ATP binding"/>
    <property type="evidence" value="ECO:0007669"/>
    <property type="project" value="InterPro"/>
</dbReference>
<dbReference type="GO" id="GO:0016776">
    <property type="term" value="F:phosphotransferase activity, phosphate group as acceptor"/>
    <property type="evidence" value="ECO:0007669"/>
    <property type="project" value="UniProtKB-UniRule"/>
</dbReference>
<dbReference type="GO" id="GO:0004674">
    <property type="term" value="F:protein serine/threonine kinase activity"/>
    <property type="evidence" value="ECO:0007669"/>
    <property type="project" value="UniProtKB-UniRule"/>
</dbReference>
<dbReference type="HAMAP" id="MF_01062">
    <property type="entry name" value="PSRP"/>
    <property type="match status" value="1"/>
</dbReference>
<dbReference type="InterPro" id="IPR005177">
    <property type="entry name" value="Kinase-pyrophosphorylase"/>
</dbReference>
<dbReference type="InterPro" id="IPR026530">
    <property type="entry name" value="PSRP"/>
</dbReference>
<dbReference type="NCBIfam" id="NF003742">
    <property type="entry name" value="PRK05339.1"/>
    <property type="match status" value="1"/>
</dbReference>
<dbReference type="PANTHER" id="PTHR31756">
    <property type="entry name" value="PYRUVATE, PHOSPHATE DIKINASE REGULATORY PROTEIN 1, CHLOROPLASTIC"/>
    <property type="match status" value="1"/>
</dbReference>
<dbReference type="PANTHER" id="PTHR31756:SF3">
    <property type="entry name" value="PYRUVATE, PHOSPHATE DIKINASE REGULATORY PROTEIN 1, CHLOROPLASTIC"/>
    <property type="match status" value="1"/>
</dbReference>
<dbReference type="Pfam" id="PF03618">
    <property type="entry name" value="Kinase-PPPase"/>
    <property type="match status" value="1"/>
</dbReference>
<organism>
    <name type="scientific">Burkholderia ambifaria (strain MC40-6)</name>
    <dbReference type="NCBI Taxonomy" id="398577"/>
    <lineage>
        <taxon>Bacteria</taxon>
        <taxon>Pseudomonadati</taxon>
        <taxon>Pseudomonadota</taxon>
        <taxon>Betaproteobacteria</taxon>
        <taxon>Burkholderiales</taxon>
        <taxon>Burkholderiaceae</taxon>
        <taxon>Burkholderia</taxon>
        <taxon>Burkholderia cepacia complex</taxon>
    </lineage>
</organism>
<sequence length="271" mass="30648">MLPTVFIVSDGTGITAETFAHSILSQFDQKFRLVRLPFVDSLEKAYATVEKINDAAVHDGRRAIVFTTLVDSESNDIVKRSNALVLDMFQRFVEPLEQELELKSSHAMGRGHQNADTEEYKTRIEAINFSLAHDDGQSNRNLSEADVILVGVSRSGKTPTSLYLAMQYGVKAANYPLIPEDFERGKLPSALTPHRDKLFGLSIDPQRLSEIRNERRPGSKYAAPENCRYEINEAEAMMRREGIKWLSSTHKSIEEIATTILQEIRLDRQSY</sequence>
<protein>
    <recommendedName>
        <fullName evidence="1">Putative phosphoenolpyruvate synthase regulatory protein</fullName>
        <shortName evidence="1">PEP synthase regulatory protein</shortName>
        <shortName evidence="1">PSRP</shortName>
        <ecNumber evidence="1">2.7.11.33</ecNumber>
        <ecNumber evidence="1">2.7.4.28</ecNumber>
    </recommendedName>
    <alternativeName>
        <fullName evidence="1">Pyruvate, water dikinase regulatory protein</fullName>
    </alternativeName>
</protein>
<reference key="1">
    <citation type="submission" date="2008-04" db="EMBL/GenBank/DDBJ databases">
        <title>Complete sequence of chromosome 1 of Burkholderia ambifaria MC40-6.</title>
        <authorList>
            <person name="Copeland A."/>
            <person name="Lucas S."/>
            <person name="Lapidus A."/>
            <person name="Glavina del Rio T."/>
            <person name="Dalin E."/>
            <person name="Tice H."/>
            <person name="Pitluck S."/>
            <person name="Chain P."/>
            <person name="Malfatti S."/>
            <person name="Shin M."/>
            <person name="Vergez L."/>
            <person name="Lang D."/>
            <person name="Schmutz J."/>
            <person name="Larimer F."/>
            <person name="Land M."/>
            <person name="Hauser L."/>
            <person name="Kyrpides N."/>
            <person name="Lykidis A."/>
            <person name="Ramette A."/>
            <person name="Konstantinidis K."/>
            <person name="Tiedje J."/>
            <person name="Richardson P."/>
        </authorList>
    </citation>
    <scope>NUCLEOTIDE SEQUENCE [LARGE SCALE GENOMIC DNA]</scope>
    <source>
        <strain>MC40-6</strain>
    </source>
</reference>
<accession>B1YS58</accession>
<feature type="chain" id="PRO_1000136456" description="Putative phosphoenolpyruvate synthase regulatory protein">
    <location>
        <begin position="1"/>
        <end position="271"/>
    </location>
</feature>
<feature type="binding site" evidence="1">
    <location>
        <begin position="151"/>
        <end position="158"/>
    </location>
    <ligand>
        <name>ADP</name>
        <dbReference type="ChEBI" id="CHEBI:456216"/>
    </ligand>
</feature>
<gene>
    <name type="ordered locus">BamMC406_1905</name>
</gene>
<comment type="function">
    <text evidence="1">Bifunctional serine/threonine kinase and phosphorylase involved in the regulation of the phosphoenolpyruvate synthase (PEPS) by catalyzing its phosphorylation/dephosphorylation.</text>
</comment>
<comment type="catalytic activity">
    <reaction evidence="1">
        <text>[pyruvate, water dikinase] + ADP = [pyruvate, water dikinase]-phosphate + AMP + H(+)</text>
        <dbReference type="Rhea" id="RHEA:46020"/>
        <dbReference type="Rhea" id="RHEA-COMP:11425"/>
        <dbReference type="Rhea" id="RHEA-COMP:11426"/>
        <dbReference type="ChEBI" id="CHEBI:15378"/>
        <dbReference type="ChEBI" id="CHEBI:43176"/>
        <dbReference type="ChEBI" id="CHEBI:68546"/>
        <dbReference type="ChEBI" id="CHEBI:456215"/>
        <dbReference type="ChEBI" id="CHEBI:456216"/>
        <dbReference type="EC" id="2.7.11.33"/>
    </reaction>
</comment>
<comment type="catalytic activity">
    <reaction evidence="1">
        <text>[pyruvate, water dikinase]-phosphate + phosphate + H(+) = [pyruvate, water dikinase] + diphosphate</text>
        <dbReference type="Rhea" id="RHEA:48580"/>
        <dbReference type="Rhea" id="RHEA-COMP:11425"/>
        <dbReference type="Rhea" id="RHEA-COMP:11426"/>
        <dbReference type="ChEBI" id="CHEBI:15378"/>
        <dbReference type="ChEBI" id="CHEBI:33019"/>
        <dbReference type="ChEBI" id="CHEBI:43176"/>
        <dbReference type="ChEBI" id="CHEBI:43474"/>
        <dbReference type="ChEBI" id="CHEBI:68546"/>
        <dbReference type="EC" id="2.7.4.28"/>
    </reaction>
</comment>
<comment type="similarity">
    <text evidence="1">Belongs to the pyruvate, phosphate/water dikinase regulatory protein family. PSRP subfamily.</text>
</comment>
<keyword id="KW-0418">Kinase</keyword>
<keyword id="KW-0547">Nucleotide-binding</keyword>
<keyword id="KW-0723">Serine/threonine-protein kinase</keyword>
<keyword id="KW-0808">Transferase</keyword>
<evidence type="ECO:0000255" key="1">
    <source>
        <dbReference type="HAMAP-Rule" id="MF_01062"/>
    </source>
</evidence>